<gene>
    <name evidence="1" type="primary">acpP</name>
    <name type="ordered locus">RSal33209_1100</name>
</gene>
<organism>
    <name type="scientific">Renibacterium salmoninarum (strain ATCC 33209 / DSM 20767 / JCM 11484 / NBRC 15589 / NCIMB 2235)</name>
    <dbReference type="NCBI Taxonomy" id="288705"/>
    <lineage>
        <taxon>Bacteria</taxon>
        <taxon>Bacillati</taxon>
        <taxon>Actinomycetota</taxon>
        <taxon>Actinomycetes</taxon>
        <taxon>Micrococcales</taxon>
        <taxon>Micrococcaceae</taxon>
        <taxon>Renibacterium</taxon>
    </lineage>
</organism>
<reference key="1">
    <citation type="journal article" date="2008" name="J. Bacteriol.">
        <title>Genome sequence of the fish pathogen Renibacterium salmoninarum suggests reductive evolution away from an environmental Arthrobacter ancestor.</title>
        <authorList>
            <person name="Wiens G.D."/>
            <person name="Rockey D.D."/>
            <person name="Wu Z."/>
            <person name="Chang J."/>
            <person name="Levy R."/>
            <person name="Crane S."/>
            <person name="Chen D.S."/>
            <person name="Capri G.R."/>
            <person name="Burnett J.R."/>
            <person name="Sudheesh P.S."/>
            <person name="Schipma M.J."/>
            <person name="Burd H."/>
            <person name="Bhattacharyya A."/>
            <person name="Rhodes L.D."/>
            <person name="Kaul R."/>
            <person name="Strom M.S."/>
        </authorList>
    </citation>
    <scope>NUCLEOTIDE SEQUENCE [LARGE SCALE GENOMIC DNA]</scope>
    <source>
        <strain>ATCC 33209 / DSM 20767 / JCM 11484 / NBRC 15589 / NCIMB 2235</strain>
    </source>
</reference>
<keyword id="KW-0963">Cytoplasm</keyword>
<keyword id="KW-0275">Fatty acid biosynthesis</keyword>
<keyword id="KW-0276">Fatty acid metabolism</keyword>
<keyword id="KW-0444">Lipid biosynthesis</keyword>
<keyword id="KW-0443">Lipid metabolism</keyword>
<keyword id="KW-0596">Phosphopantetheine</keyword>
<keyword id="KW-0597">Phosphoprotein</keyword>
<keyword id="KW-1185">Reference proteome</keyword>
<sequence length="81" mass="8673">MASNEEILAGLAEIVNEETGLAPEAVELDKSFTDDLDIDSISMMTIVVNAEEKFGVRIPDEEVKNLKTVGDAVSYIASAQA</sequence>
<protein>
    <recommendedName>
        <fullName evidence="1">Acyl carrier protein</fullName>
        <shortName evidence="1">ACP</shortName>
    </recommendedName>
</protein>
<dbReference type="EMBL" id="CP000910">
    <property type="protein sequence ID" value="ABY22838.1"/>
    <property type="molecule type" value="Genomic_DNA"/>
</dbReference>
<dbReference type="RefSeq" id="WP_012244525.1">
    <property type="nucleotide sequence ID" value="NC_010168.1"/>
</dbReference>
<dbReference type="SMR" id="A9WP63"/>
<dbReference type="STRING" id="288705.RSal33209_1100"/>
<dbReference type="KEGG" id="rsa:RSal33209_1100"/>
<dbReference type="eggNOG" id="COG0236">
    <property type="taxonomic scope" value="Bacteria"/>
</dbReference>
<dbReference type="HOGENOM" id="CLU_108696_5_6_11"/>
<dbReference type="UniPathway" id="UPA00094"/>
<dbReference type="Proteomes" id="UP000002007">
    <property type="component" value="Chromosome"/>
</dbReference>
<dbReference type="GO" id="GO:0005829">
    <property type="term" value="C:cytosol"/>
    <property type="evidence" value="ECO:0007669"/>
    <property type="project" value="TreeGrafter"/>
</dbReference>
<dbReference type="GO" id="GO:0016020">
    <property type="term" value="C:membrane"/>
    <property type="evidence" value="ECO:0007669"/>
    <property type="project" value="GOC"/>
</dbReference>
<dbReference type="GO" id="GO:0000035">
    <property type="term" value="F:acyl binding"/>
    <property type="evidence" value="ECO:0007669"/>
    <property type="project" value="TreeGrafter"/>
</dbReference>
<dbReference type="GO" id="GO:0000036">
    <property type="term" value="F:acyl carrier activity"/>
    <property type="evidence" value="ECO:0007669"/>
    <property type="project" value="UniProtKB-UniRule"/>
</dbReference>
<dbReference type="GO" id="GO:0009245">
    <property type="term" value="P:lipid A biosynthetic process"/>
    <property type="evidence" value="ECO:0007669"/>
    <property type="project" value="TreeGrafter"/>
</dbReference>
<dbReference type="Gene3D" id="1.10.1200.10">
    <property type="entry name" value="ACP-like"/>
    <property type="match status" value="1"/>
</dbReference>
<dbReference type="HAMAP" id="MF_01217">
    <property type="entry name" value="Acyl_carrier"/>
    <property type="match status" value="1"/>
</dbReference>
<dbReference type="InterPro" id="IPR003231">
    <property type="entry name" value="ACP"/>
</dbReference>
<dbReference type="InterPro" id="IPR036736">
    <property type="entry name" value="ACP-like_sf"/>
</dbReference>
<dbReference type="InterPro" id="IPR009081">
    <property type="entry name" value="PP-bd_ACP"/>
</dbReference>
<dbReference type="NCBIfam" id="NF002147">
    <property type="entry name" value="PRK00982.1-1"/>
    <property type="match status" value="1"/>
</dbReference>
<dbReference type="NCBIfam" id="NF002150">
    <property type="entry name" value="PRK00982.1-4"/>
    <property type="match status" value="1"/>
</dbReference>
<dbReference type="PANTHER" id="PTHR20863">
    <property type="entry name" value="ACYL CARRIER PROTEIN"/>
    <property type="match status" value="1"/>
</dbReference>
<dbReference type="PANTHER" id="PTHR20863:SF76">
    <property type="entry name" value="CARRIER DOMAIN-CONTAINING PROTEIN"/>
    <property type="match status" value="1"/>
</dbReference>
<dbReference type="Pfam" id="PF00550">
    <property type="entry name" value="PP-binding"/>
    <property type="match status" value="1"/>
</dbReference>
<dbReference type="SUPFAM" id="SSF47336">
    <property type="entry name" value="ACP-like"/>
    <property type="match status" value="1"/>
</dbReference>
<dbReference type="PROSITE" id="PS50075">
    <property type="entry name" value="CARRIER"/>
    <property type="match status" value="1"/>
</dbReference>
<comment type="function">
    <text evidence="1">Carrier of the growing fatty acid chain in fatty acid biosynthesis.</text>
</comment>
<comment type="pathway">
    <text evidence="1">Lipid metabolism; fatty acid biosynthesis.</text>
</comment>
<comment type="subcellular location">
    <subcellularLocation>
        <location evidence="1">Cytoplasm</location>
    </subcellularLocation>
</comment>
<comment type="PTM">
    <text evidence="1">4'-phosphopantetheine is transferred from CoA to a specific serine of apo-ACP by AcpS. This modification is essential for activity because fatty acids are bound in thioester linkage to the sulfhydryl of the prosthetic group.</text>
</comment>
<comment type="similarity">
    <text evidence="1">Belongs to the acyl carrier protein (ACP) family.</text>
</comment>
<proteinExistence type="inferred from homology"/>
<feature type="chain" id="PRO_1000085609" description="Acyl carrier protein">
    <location>
        <begin position="1"/>
        <end position="81"/>
    </location>
</feature>
<feature type="domain" description="Carrier" evidence="2">
    <location>
        <begin position="2"/>
        <end position="80"/>
    </location>
</feature>
<feature type="modified residue" description="O-(pantetheine 4'-phosphoryl)serine" evidence="2">
    <location>
        <position position="40"/>
    </location>
</feature>
<accession>A9WP63</accession>
<name>ACP_RENSM</name>
<evidence type="ECO:0000255" key="1">
    <source>
        <dbReference type="HAMAP-Rule" id="MF_01217"/>
    </source>
</evidence>
<evidence type="ECO:0000255" key="2">
    <source>
        <dbReference type="PROSITE-ProRule" id="PRU00258"/>
    </source>
</evidence>